<gene>
    <name evidence="2" type="primary">ERG4</name>
    <name type="ordered locus">orf19.5379</name>
    <name type="ORF">CAALFM_C300760WA</name>
</gene>
<dbReference type="EC" id="1.3.1.71" evidence="2"/>
<dbReference type="EMBL" id="CP017625">
    <property type="protein sequence ID" value="AOW28125.1"/>
    <property type="molecule type" value="Genomic_DNA"/>
</dbReference>
<dbReference type="RefSeq" id="XP_717756.2">
    <property type="nucleotide sequence ID" value="XM_712663.2"/>
</dbReference>
<dbReference type="SMR" id="A0A1D8PJ25"/>
<dbReference type="FunCoup" id="A0A1D8PJ25">
    <property type="interactions" value="112"/>
</dbReference>
<dbReference type="STRING" id="237561.A0A1D8PJ25"/>
<dbReference type="EnsemblFungi" id="C3_00760W_A-T">
    <property type="protein sequence ID" value="C3_00760W_A-T-p1"/>
    <property type="gene ID" value="C3_00760W_A"/>
</dbReference>
<dbReference type="GeneID" id="3640511"/>
<dbReference type="KEGG" id="cal:CAALFM_C300760WA"/>
<dbReference type="CGD" id="CAL0000199354">
    <property type="gene designation" value="ERG4"/>
</dbReference>
<dbReference type="VEuPathDB" id="FungiDB:C3_00760W_A"/>
<dbReference type="eggNOG" id="KOG1435">
    <property type="taxonomic scope" value="Eukaryota"/>
</dbReference>
<dbReference type="InParanoid" id="A0A1D8PJ25"/>
<dbReference type="OrthoDB" id="5326588at2759"/>
<dbReference type="UniPathway" id="UPA00768">
    <property type="reaction ID" value="UER00764"/>
</dbReference>
<dbReference type="Proteomes" id="UP000000559">
    <property type="component" value="Chromosome 3"/>
</dbReference>
<dbReference type="GO" id="GO:0005789">
    <property type="term" value="C:endoplasmic reticulum membrane"/>
    <property type="evidence" value="ECO:0000318"/>
    <property type="project" value="GO_Central"/>
</dbReference>
<dbReference type="GO" id="GO:0000246">
    <property type="term" value="F:Delta24(24-1) sterol reductase activity"/>
    <property type="evidence" value="ECO:0000318"/>
    <property type="project" value="GO_Central"/>
</dbReference>
<dbReference type="GO" id="GO:0006696">
    <property type="term" value="P:ergosterol biosynthetic process"/>
    <property type="evidence" value="ECO:0000318"/>
    <property type="project" value="GO_Central"/>
</dbReference>
<dbReference type="FunFam" id="1.20.120.1630:FF:000003">
    <property type="entry name" value="C-24(28) sterol reductase"/>
    <property type="match status" value="1"/>
</dbReference>
<dbReference type="Gene3D" id="1.20.120.1630">
    <property type="match status" value="1"/>
</dbReference>
<dbReference type="InterPro" id="IPR001171">
    <property type="entry name" value="ERG24_DHCR-like"/>
</dbReference>
<dbReference type="InterPro" id="IPR018083">
    <property type="entry name" value="Sterol_reductase_CS"/>
</dbReference>
<dbReference type="PANTHER" id="PTHR21257">
    <property type="entry name" value="DELTA(14)-STEROL REDUCTASE"/>
    <property type="match status" value="1"/>
</dbReference>
<dbReference type="PANTHER" id="PTHR21257:SF31">
    <property type="entry name" value="DELTA(24(24(1)))-STEROL REDUCTASE ERG4"/>
    <property type="match status" value="1"/>
</dbReference>
<dbReference type="Pfam" id="PF01222">
    <property type="entry name" value="ERG4_ERG24"/>
    <property type="match status" value="1"/>
</dbReference>
<dbReference type="PROSITE" id="PS01017">
    <property type="entry name" value="STEROL_REDUCT_1"/>
    <property type="match status" value="1"/>
</dbReference>
<dbReference type="PROSITE" id="PS01018">
    <property type="entry name" value="STEROL_REDUCT_2"/>
    <property type="match status" value="1"/>
</dbReference>
<comment type="function">
    <text evidence="2 7">C-24(28) sterol reductase; part of the third module of ergosterol biosynthesis pathway that includes the late steps of the pathway (By similarity). Catalyzes the last step of ergosterol biosynthesis by converting ergosta-5,7,22,24(28)-tetraen-3beta-ol into ergosterol (By similarity). The third module or late pathway involves the ergosterol synthesis itself through consecutive reactions that mainly occur in the endoplasmic reticulum (ER) membrane. Firstly, the squalene synthase ERG9 catalyzes the condensation of 2 farnesyl pyrophosphate moieties to form squalene, which is the precursor of all steroids. Squalene synthase is crucial for balancing the incorporation of farnesyl diphosphate (FPP) into sterol and nonsterol isoprene synthesis. Secondly, the squalene epoxidase ERG1 catalyzes the stereospecific oxidation of squalene to (S)-2,3-epoxysqualene, which is considered to be a rate-limiting enzyme in steroid biosynthesis. Then, the lanosterol synthase ERG7 catalyzes the cyclization of (S)-2,3 oxidosqualene to lanosterol, a reaction that forms the sterol core. In the next steps, lanosterol is transformed to zymosterol through a complex process involving various demethylation, reduction and desaturation reactions. The lanosterol 14-alpha-demethylase ERG11 (also known as CYP51) catalyzes C14-demethylation of lanosterol to produce 4,4'-dimethyl cholesta-8,14,24-triene-3-beta-ol, which is critical for ergosterol biosynthesis. The C-14 reductase ERG24 reduces the C14=C15 double bond of 4,4-dimethyl-cholesta-8,14,24-trienol to produce 4,4-dimethyl-cholesta-8,24-dienol. 4,4-dimethyl-cholesta-8,24-dienol is substrate of the C-4 demethylation complex ERG25-ERG26-ERG27 in which ERG25 catalyzes the three-step monooxygenation required for the demethylation of 4,4-dimethyl and 4alpha-methylsterols, ERG26 catalyzes the oxidative decarboxylation that results in a reduction of the 3-beta-hydroxy group at the C-3 carbon to an oxo group, and ERG27 is responsible for the reduction of the keto group on the C-3. ERG28 has a role as a scaffold to help anchor ERG25, ERG26 and ERG27 to the endoplasmic reticulum and ERG29 regulates the activity of the iron-containing C4-methylsterol oxidase ERG25. Then, the sterol 24-C-methyltransferase ERG6 catalyzes the methyl transfer from S-adenosyl-methionine to the C-24 of zymosterol to form fecosterol. The C-8 sterol isomerase ERG2 catalyzes the reaction which results in unsaturation at C-7 in the B ring of sterols and thus converts fecosterol to episterol. The sterol-C5-desaturase ERG3 then catalyzes the introduction of a C-5 double bond in the B ring to produce 5-dehydroepisterol. The C-22 sterol desaturase ERG5 further converts 5-dehydroepisterol into ergosta-5,7,22,24(28)-tetraen-3beta-ol by forming the C-22(23) double bond in the sterol side chain. Finally, ergosta-5,7,22,24(28)-tetraen-3beta-ol is substrate of the C-24(28) sterol reductase ERG4 to produce ergosterol (Probable).</text>
</comment>
<comment type="catalytic activity">
    <reaction evidence="2">
        <text>ergosterol + NADP(+) = ergosta-5,7,22,24(28)-tetraen-3beta-ol + NADPH + H(+)</text>
        <dbReference type="Rhea" id="RHEA:18501"/>
        <dbReference type="ChEBI" id="CHEBI:15378"/>
        <dbReference type="ChEBI" id="CHEBI:16933"/>
        <dbReference type="ChEBI" id="CHEBI:18249"/>
        <dbReference type="ChEBI" id="CHEBI:57783"/>
        <dbReference type="ChEBI" id="CHEBI:58349"/>
        <dbReference type="EC" id="1.3.1.71"/>
    </reaction>
    <physiologicalReaction direction="right-to-left" evidence="2">
        <dbReference type="Rhea" id="RHEA:18503"/>
    </physiologicalReaction>
</comment>
<comment type="pathway">
    <text evidence="2">Steroid metabolism; ergosterol biosynthesis; ergosterol from zymosterol: step 5/5.</text>
</comment>
<comment type="subcellular location">
    <subcellularLocation>
        <location evidence="7">Endoplasmic reticulum membrane</location>
        <topology evidence="3">Multi-pass membrane protein</topology>
    </subcellularLocation>
</comment>
<comment type="induction">
    <text evidence="5 6">Expression is induced by fluconazole and repressed by caspofungin (PubMed:15917516). Expression is also repressed during biofilm formation (PubMed:19527170).</text>
</comment>
<comment type="similarity">
    <text evidence="7">Belongs to the ERG4/ERG24 family.</text>
</comment>
<name>ERG4_CANAL</name>
<evidence type="ECO:0000250" key="1">
    <source>
        <dbReference type="UniProtKB" id="G4SW86"/>
    </source>
</evidence>
<evidence type="ECO:0000250" key="2">
    <source>
        <dbReference type="UniProtKB" id="P25340"/>
    </source>
</evidence>
<evidence type="ECO:0000255" key="3"/>
<evidence type="ECO:0000256" key="4">
    <source>
        <dbReference type="SAM" id="MobiDB-lite"/>
    </source>
</evidence>
<evidence type="ECO:0000269" key="5">
    <source>
    </source>
</evidence>
<evidence type="ECO:0000269" key="6">
    <source>
    </source>
</evidence>
<evidence type="ECO:0000305" key="7"/>
<protein>
    <recommendedName>
        <fullName evidence="2">Delta(24(24(1)))-sterol reductase</fullName>
        <ecNumber evidence="2">1.3.1.71</ecNumber>
    </recommendedName>
    <alternativeName>
        <fullName evidence="2">C-24(28) sterol reductase</fullName>
    </alternativeName>
    <alternativeName>
        <fullName evidence="2">Ergosterol biosynthetic protein 4</fullName>
    </alternativeName>
    <alternativeName>
        <fullName evidence="2">Sterol Delta(24(28))-reductase</fullName>
    </alternativeName>
</protein>
<reference key="1">
    <citation type="journal article" date="2004" name="Proc. Natl. Acad. Sci. U.S.A.">
        <title>The diploid genome sequence of Candida albicans.</title>
        <authorList>
            <person name="Jones T."/>
            <person name="Federspiel N.A."/>
            <person name="Chibana H."/>
            <person name="Dungan J."/>
            <person name="Kalman S."/>
            <person name="Magee B.B."/>
            <person name="Newport G."/>
            <person name="Thorstenson Y.R."/>
            <person name="Agabian N."/>
            <person name="Magee P.T."/>
            <person name="Davis R.W."/>
            <person name="Scherer S."/>
        </authorList>
    </citation>
    <scope>NUCLEOTIDE SEQUENCE [LARGE SCALE GENOMIC DNA]</scope>
    <source>
        <strain>SC5314 / ATCC MYA-2876</strain>
    </source>
</reference>
<reference key="2">
    <citation type="journal article" date="2007" name="Genome Biol.">
        <title>Assembly of the Candida albicans genome into sixteen supercontigs aligned on the eight chromosomes.</title>
        <authorList>
            <person name="van het Hoog M."/>
            <person name="Rast T.J."/>
            <person name="Martchenko M."/>
            <person name="Grindle S."/>
            <person name="Dignard D."/>
            <person name="Hogues H."/>
            <person name="Cuomo C."/>
            <person name="Berriman M."/>
            <person name="Scherer S."/>
            <person name="Magee B.B."/>
            <person name="Whiteway M."/>
            <person name="Chibana H."/>
            <person name="Nantel A."/>
            <person name="Magee P.T."/>
        </authorList>
    </citation>
    <scope>GENOME REANNOTATION</scope>
    <source>
        <strain>SC5314 / ATCC MYA-2876</strain>
    </source>
</reference>
<reference key="3">
    <citation type="journal article" date="2013" name="Genome Biol.">
        <title>Assembly of a phased diploid Candida albicans genome facilitates allele-specific measurements and provides a simple model for repeat and indel structure.</title>
        <authorList>
            <person name="Muzzey D."/>
            <person name="Schwartz K."/>
            <person name="Weissman J.S."/>
            <person name="Sherlock G."/>
        </authorList>
    </citation>
    <scope>NUCLEOTIDE SEQUENCE [LARGE SCALE GENOMIC DNA]</scope>
    <scope>GENOME REANNOTATION</scope>
    <source>
        <strain>SC5314 / ATCC MYA-2876</strain>
    </source>
</reference>
<reference key="4">
    <citation type="journal article" date="2005" name="Antimicrob. Agents Chemother.">
        <title>Genome-wide expression profiling of the response to azole, polyene, echinocandin, and pyrimidine antifungal agents in Candida albicans.</title>
        <authorList>
            <person name="Liu T.T."/>
            <person name="Lee R.E."/>
            <person name="Barker K.S."/>
            <person name="Lee R.E."/>
            <person name="Wei L."/>
            <person name="Homayouni R."/>
            <person name="Rogers P.D."/>
        </authorList>
    </citation>
    <scope>INDUCTION</scope>
</reference>
<reference key="5">
    <citation type="journal article" date="2009" name="J. Infect. Dis.">
        <title>Time course global gene expression analysis of an in vivo Candida biofilm.</title>
        <authorList>
            <person name="Nett J.E."/>
            <person name="Lepak A.J."/>
            <person name="Marchillo K."/>
            <person name="Andes D.R."/>
        </authorList>
    </citation>
    <scope>INDUCTION</scope>
</reference>
<sequence length="469" mass="54837">MAASDTQSTSDETTPLVGSDESRYIPKDQIEYEFGGPIGALGMMIGFPLLMWYMWISAQFYNGQFALPSEGQSWKDFIIDDLFSKWVEYGIPSFGNWAFFTGFILIQALFYVTLPGVWTKGQPLTHLNNKQLPYFCNAIWSFYTSIVLSLVLHFTGVLPVYYMLDNVGGIMTTAIFYGISLSIILYLICIFVTGDYHRMTGNHIYDMFMGAPLNPRIGKYLDLKMFFEVRIPWFILFFLSFGLCFKQYETYGYVTPQACFMLYAHWLYANACAKGEELIVPTWDMAYEKFGFMLLFWNIAGVPFSYCQCILYIAYQEPEVYQWSIGYNVFLFVLITIAYYFFDTGNRQKNSFRRSVAGNSQLRKTFPYLPYSDLVNPKYIKCANGSLLLTDGWYVYARKMHYTADYIQTLTWALMCGFGSPFPWFFPIFFFIVLVHRGYRDQRKCAKKYGKDWDRYLEACPYMFIPYVW</sequence>
<keyword id="KW-0256">Endoplasmic reticulum</keyword>
<keyword id="KW-0444">Lipid biosynthesis</keyword>
<keyword id="KW-0443">Lipid metabolism</keyword>
<keyword id="KW-0472">Membrane</keyword>
<keyword id="KW-0521">NADP</keyword>
<keyword id="KW-0560">Oxidoreductase</keyword>
<keyword id="KW-1185">Reference proteome</keyword>
<keyword id="KW-0752">Steroid biosynthesis</keyword>
<keyword id="KW-0753">Steroid metabolism</keyword>
<keyword id="KW-0756">Sterol biosynthesis</keyword>
<keyword id="KW-1207">Sterol metabolism</keyword>
<keyword id="KW-0812">Transmembrane</keyword>
<keyword id="KW-1133">Transmembrane helix</keyword>
<proteinExistence type="evidence at transcript level"/>
<accession>A0A1D8PJ25</accession>
<feature type="chain" id="PRO_0000454173" description="Delta(24(24(1)))-sterol reductase">
    <location>
        <begin position="1"/>
        <end position="469"/>
    </location>
</feature>
<feature type="transmembrane region" description="Helical" evidence="3">
    <location>
        <begin position="36"/>
        <end position="56"/>
    </location>
</feature>
<feature type="transmembrane region" description="Helical" evidence="3">
    <location>
        <begin position="97"/>
        <end position="117"/>
    </location>
</feature>
<feature type="transmembrane region" description="Helical" evidence="3">
    <location>
        <begin position="138"/>
        <end position="158"/>
    </location>
</feature>
<feature type="transmembrane region" description="Helical" evidence="3">
    <location>
        <begin position="174"/>
        <end position="194"/>
    </location>
</feature>
<feature type="transmembrane region" description="Helical" evidence="3">
    <location>
        <begin position="225"/>
        <end position="245"/>
    </location>
</feature>
<feature type="transmembrane region" description="Helical" evidence="3">
    <location>
        <begin position="290"/>
        <end position="310"/>
    </location>
</feature>
<feature type="transmembrane region" description="Helical" evidence="3">
    <location>
        <begin position="322"/>
        <end position="342"/>
    </location>
</feature>
<feature type="transmembrane region" description="Helical" evidence="3">
    <location>
        <begin position="415"/>
        <end position="435"/>
    </location>
</feature>
<feature type="region of interest" description="Disordered" evidence="4">
    <location>
        <begin position="1"/>
        <end position="20"/>
    </location>
</feature>
<feature type="compositionally biased region" description="Polar residues" evidence="4">
    <location>
        <begin position="1"/>
        <end position="13"/>
    </location>
</feature>
<feature type="binding site" evidence="1">
    <location>
        <position position="349"/>
    </location>
    <ligand>
        <name>NADP(+)</name>
        <dbReference type="ChEBI" id="CHEBI:58349"/>
    </ligand>
</feature>
<feature type="binding site" evidence="1">
    <location>
        <position position="353"/>
    </location>
    <ligand>
        <name>NADP(+)</name>
        <dbReference type="ChEBI" id="CHEBI:58349"/>
    </ligand>
</feature>
<feature type="binding site" evidence="1">
    <location>
        <position position="389"/>
    </location>
    <ligand>
        <name>NADP(+)</name>
        <dbReference type="ChEBI" id="CHEBI:58349"/>
    </ligand>
</feature>
<feature type="binding site" evidence="1">
    <location>
        <begin position="401"/>
        <end position="402"/>
    </location>
    <ligand>
        <name>NADP(+)</name>
        <dbReference type="ChEBI" id="CHEBI:58349"/>
    </ligand>
</feature>
<feature type="binding site" evidence="1">
    <location>
        <position position="441"/>
    </location>
    <ligand>
        <name>NADP(+)</name>
        <dbReference type="ChEBI" id="CHEBI:58349"/>
    </ligand>
</feature>
<feature type="binding site" evidence="1">
    <location>
        <begin position="445"/>
        <end position="449"/>
    </location>
    <ligand>
        <name>NADP(+)</name>
        <dbReference type="ChEBI" id="CHEBI:58349"/>
    </ligand>
</feature>
<feature type="binding site" evidence="1">
    <location>
        <position position="456"/>
    </location>
    <ligand>
        <name>NADP(+)</name>
        <dbReference type="ChEBI" id="CHEBI:58349"/>
    </ligand>
</feature>
<organism>
    <name type="scientific">Candida albicans (strain SC5314 / ATCC MYA-2876)</name>
    <name type="common">Yeast</name>
    <dbReference type="NCBI Taxonomy" id="237561"/>
    <lineage>
        <taxon>Eukaryota</taxon>
        <taxon>Fungi</taxon>
        <taxon>Dikarya</taxon>
        <taxon>Ascomycota</taxon>
        <taxon>Saccharomycotina</taxon>
        <taxon>Pichiomycetes</taxon>
        <taxon>Debaryomycetaceae</taxon>
        <taxon>Candida/Lodderomyces clade</taxon>
        <taxon>Candida</taxon>
    </lineage>
</organism>